<reference key="1">
    <citation type="journal article" date="1986" name="Plant Sci.">
        <title>The nucleotide sequence of a wheat gamma-gliadin genomic clone.</title>
        <authorList>
            <person name="Sugiyama T."/>
            <person name="Rafalski A."/>
            <person name="Soell D."/>
        </authorList>
    </citation>
    <scope>NUCLEOTIDE SEQUENCE [GENOMIC DNA]</scope>
</reference>
<dbReference type="EMBL" id="M16064">
    <property type="protein sequence ID" value="AAA34289.1"/>
    <property type="molecule type" value="Genomic_DNA"/>
</dbReference>
<dbReference type="PIR" id="JS0402">
    <property type="entry name" value="JS0402"/>
</dbReference>
<dbReference type="Proteomes" id="UP000019116">
    <property type="component" value="Unplaced"/>
</dbReference>
<dbReference type="ExpressionAtlas" id="P08453">
    <property type="expression patterns" value="baseline and differential"/>
</dbReference>
<dbReference type="GO" id="GO:0140693">
    <property type="term" value="F:molecular condensate scaffold activity"/>
    <property type="evidence" value="ECO:0000314"/>
    <property type="project" value="DisProt"/>
</dbReference>
<dbReference type="GO" id="GO:0045735">
    <property type="term" value="F:nutrient reservoir activity"/>
    <property type="evidence" value="ECO:0007669"/>
    <property type="project" value="UniProtKB-KW"/>
</dbReference>
<dbReference type="CDD" id="cd00261">
    <property type="entry name" value="AAI_SS"/>
    <property type="match status" value="1"/>
</dbReference>
<dbReference type="Gene3D" id="1.10.110.10">
    <property type="entry name" value="Plant lipid-transfer and hydrophobic proteins"/>
    <property type="match status" value="1"/>
</dbReference>
<dbReference type="InterPro" id="IPR036312">
    <property type="entry name" value="Bifun_inhib/LTP/seed_sf"/>
</dbReference>
<dbReference type="InterPro" id="IPR016140">
    <property type="entry name" value="Bifunc_inhib/LTP/seed_store"/>
</dbReference>
<dbReference type="InterPro" id="IPR001954">
    <property type="entry name" value="Glia_glutenin"/>
</dbReference>
<dbReference type="PANTHER" id="PTHR33454:SF16">
    <property type="entry name" value="GAMMA-GLIADIN"/>
    <property type="match status" value="1"/>
</dbReference>
<dbReference type="PANTHER" id="PTHR33454">
    <property type="entry name" value="PROLAMIN PPROL 14P"/>
    <property type="match status" value="1"/>
</dbReference>
<dbReference type="Pfam" id="PF13016">
    <property type="entry name" value="Gliadin"/>
    <property type="match status" value="1"/>
</dbReference>
<dbReference type="PRINTS" id="PR00208">
    <property type="entry name" value="GLIADGLUTEN"/>
</dbReference>
<dbReference type="PRINTS" id="PR00209">
    <property type="entry name" value="GLIADIN"/>
</dbReference>
<dbReference type="SUPFAM" id="SSF47699">
    <property type="entry name" value="Bifunctional inhibitor/lipid-transfer protein/seed storage 2S albumin"/>
    <property type="match status" value="1"/>
</dbReference>
<comment type="function">
    <text>Gliadin is the major seed storage protein in wheat.</text>
</comment>
<comment type="miscellaneous">
    <text>The gamma-gliadins can be divided into 3 homology classes. Sequence divergence between the classes is due to single-base substitutions and to duplications or deletions within or near direct repeats.</text>
</comment>
<comment type="similarity">
    <text evidence="2">Belongs to the gliadin/glutenin family.</text>
</comment>
<protein>
    <recommendedName>
        <fullName>Gamma-gliadin</fullName>
    </recommendedName>
</protein>
<keyword id="KW-1185">Reference proteome</keyword>
<keyword id="KW-0677">Repeat</keyword>
<keyword id="KW-0708">Seed storage protein</keyword>
<keyword id="KW-0732">Signal</keyword>
<keyword id="KW-0758">Storage protein</keyword>
<sequence>MKTLLILTILAMAITIGTANIQVDPSGQVQWLQQQLVPQLQQPLSQQPQQTFPQPQQTFPHQPQQQVPQPQQPQQPFLQPQQPFPQQPQQPFPQTQQPQQPFPQQPQQPFPQTQQPQQPFPQQPQQPFPQTQQPQQPFPQLQQPQQPFPQPQQQLPQPQQPQQSFPQQQRPFIQPSLQQQLNPCKNILLQQSKPASLVSSLWSIIWPQSDCQVMRQQCCQQLAQIPQQLQCAAIHSVVHSIIMQQQQQQQQQQGIDIFLPLSQHEQVGQGSLVQGQGIIQPQQPAQLEAIRSLVLQTLPSMCNVYVPPECSIMRAPFASIVAGIGGQ</sequence>
<accession>P08453</accession>
<proteinExistence type="inferred from homology"/>
<feature type="signal peptide">
    <location>
        <begin position="1"/>
        <end position="19"/>
    </location>
</feature>
<feature type="chain" id="PRO_0000032279" description="Gamma-gliadin">
    <location>
        <begin position="20"/>
        <end position="327"/>
    </location>
</feature>
<feature type="region of interest" description="Disordered" evidence="1">
    <location>
        <begin position="42"/>
        <end position="169"/>
    </location>
</feature>
<feature type="compositionally biased region" description="Low complexity" evidence="1">
    <location>
        <begin position="42"/>
        <end position="81"/>
    </location>
</feature>
<feature type="compositionally biased region" description="Pro residues" evidence="1">
    <location>
        <begin position="82"/>
        <end position="91"/>
    </location>
</feature>
<feature type="compositionally biased region" description="Pro residues" evidence="1">
    <location>
        <begin position="100"/>
        <end position="109"/>
    </location>
</feature>
<feature type="compositionally biased region" description="Pro residues" evidence="1">
    <location>
        <begin position="118"/>
        <end position="127"/>
    </location>
</feature>
<feature type="compositionally biased region" description="Low complexity" evidence="1">
    <location>
        <begin position="128"/>
        <end position="169"/>
    </location>
</feature>
<name>GDB2_WHEAT</name>
<evidence type="ECO:0000256" key="1">
    <source>
        <dbReference type="SAM" id="MobiDB-lite"/>
    </source>
</evidence>
<evidence type="ECO:0000305" key="2"/>
<organism>
    <name type="scientific">Triticum aestivum</name>
    <name type="common">Wheat</name>
    <dbReference type="NCBI Taxonomy" id="4565"/>
    <lineage>
        <taxon>Eukaryota</taxon>
        <taxon>Viridiplantae</taxon>
        <taxon>Streptophyta</taxon>
        <taxon>Embryophyta</taxon>
        <taxon>Tracheophyta</taxon>
        <taxon>Spermatophyta</taxon>
        <taxon>Magnoliopsida</taxon>
        <taxon>Liliopsida</taxon>
        <taxon>Poales</taxon>
        <taxon>Poaceae</taxon>
        <taxon>BOP clade</taxon>
        <taxon>Pooideae</taxon>
        <taxon>Triticodae</taxon>
        <taxon>Triticeae</taxon>
        <taxon>Triticinae</taxon>
        <taxon>Triticum</taxon>
    </lineage>
</organism>